<comment type="function">
    <text evidence="1">Involved in the gluconeogenesis. Catalyzes stereospecifically the conversion of dihydroxyacetone phosphate (DHAP) to D-glyceraldehyde-3-phosphate (G3P).</text>
</comment>
<comment type="catalytic activity">
    <reaction evidence="1">
        <text>D-glyceraldehyde 3-phosphate = dihydroxyacetone phosphate</text>
        <dbReference type="Rhea" id="RHEA:18585"/>
        <dbReference type="ChEBI" id="CHEBI:57642"/>
        <dbReference type="ChEBI" id="CHEBI:59776"/>
        <dbReference type="EC" id="5.3.1.1"/>
    </reaction>
</comment>
<comment type="pathway">
    <text evidence="1">Carbohydrate biosynthesis; gluconeogenesis.</text>
</comment>
<comment type="pathway">
    <text evidence="1">Carbohydrate degradation; glycolysis; D-glyceraldehyde 3-phosphate from glycerone phosphate: step 1/1.</text>
</comment>
<comment type="subunit">
    <text evidence="1">Homotetramer; dimer of dimers.</text>
</comment>
<comment type="subcellular location">
    <subcellularLocation>
        <location evidence="1">Cytoplasm</location>
    </subcellularLocation>
</comment>
<comment type="similarity">
    <text evidence="1">Belongs to the triosephosphate isomerase family.</text>
</comment>
<evidence type="ECO:0000255" key="1">
    <source>
        <dbReference type="HAMAP-Rule" id="MF_00147"/>
    </source>
</evidence>
<keyword id="KW-0963">Cytoplasm</keyword>
<keyword id="KW-0312">Gluconeogenesis</keyword>
<keyword id="KW-0324">Glycolysis</keyword>
<keyword id="KW-0413">Isomerase</keyword>
<gene>
    <name evidence="1" type="primary">tpiA</name>
    <name type="ordered locus">Mbar_A0934</name>
</gene>
<dbReference type="EC" id="5.3.1.1" evidence="1"/>
<dbReference type="EMBL" id="CP000099">
    <property type="protein sequence ID" value="AAZ69906.1"/>
    <property type="molecule type" value="Genomic_DNA"/>
</dbReference>
<dbReference type="SMR" id="Q46DY6"/>
<dbReference type="STRING" id="269797.Mbar_A0934"/>
<dbReference type="PaxDb" id="269797-Mbar_A0934"/>
<dbReference type="KEGG" id="mba:Mbar_A0934"/>
<dbReference type="eggNOG" id="arCOG01087">
    <property type="taxonomic scope" value="Archaea"/>
</dbReference>
<dbReference type="HOGENOM" id="CLU_104921_0_0_2"/>
<dbReference type="OrthoDB" id="9465at2157"/>
<dbReference type="UniPathway" id="UPA00109">
    <property type="reaction ID" value="UER00189"/>
</dbReference>
<dbReference type="UniPathway" id="UPA00138"/>
<dbReference type="GO" id="GO:0005737">
    <property type="term" value="C:cytoplasm"/>
    <property type="evidence" value="ECO:0007669"/>
    <property type="project" value="UniProtKB-SubCell"/>
</dbReference>
<dbReference type="GO" id="GO:0004807">
    <property type="term" value="F:triose-phosphate isomerase activity"/>
    <property type="evidence" value="ECO:0007669"/>
    <property type="project" value="UniProtKB-UniRule"/>
</dbReference>
<dbReference type="GO" id="GO:0006094">
    <property type="term" value="P:gluconeogenesis"/>
    <property type="evidence" value="ECO:0007669"/>
    <property type="project" value="UniProtKB-UniRule"/>
</dbReference>
<dbReference type="GO" id="GO:0006096">
    <property type="term" value="P:glycolytic process"/>
    <property type="evidence" value="ECO:0007669"/>
    <property type="project" value="UniProtKB-UniRule"/>
</dbReference>
<dbReference type="CDD" id="cd00311">
    <property type="entry name" value="TIM"/>
    <property type="match status" value="1"/>
</dbReference>
<dbReference type="FunFam" id="3.20.20.70:FF:000223">
    <property type="entry name" value="Triosephosphate isomerase"/>
    <property type="match status" value="1"/>
</dbReference>
<dbReference type="Gene3D" id="3.20.20.70">
    <property type="entry name" value="Aldolase class I"/>
    <property type="match status" value="1"/>
</dbReference>
<dbReference type="HAMAP" id="MF_00147_A">
    <property type="entry name" value="TIM_A"/>
    <property type="match status" value="1"/>
</dbReference>
<dbReference type="InterPro" id="IPR013785">
    <property type="entry name" value="Aldolase_TIM"/>
</dbReference>
<dbReference type="InterPro" id="IPR035990">
    <property type="entry name" value="TIM_sf"/>
</dbReference>
<dbReference type="InterPro" id="IPR000652">
    <property type="entry name" value="Triosephosphate_isomerase"/>
</dbReference>
<dbReference type="InterPro" id="IPR022891">
    <property type="entry name" value="Triosephosphate_isomerase_arc"/>
</dbReference>
<dbReference type="NCBIfam" id="NF003302">
    <property type="entry name" value="PRK04302.1"/>
    <property type="match status" value="1"/>
</dbReference>
<dbReference type="NCBIfam" id="TIGR00419">
    <property type="entry name" value="tim"/>
    <property type="match status" value="1"/>
</dbReference>
<dbReference type="Pfam" id="PF00121">
    <property type="entry name" value="TIM"/>
    <property type="match status" value="1"/>
</dbReference>
<dbReference type="SUPFAM" id="SSF51351">
    <property type="entry name" value="Triosephosphate isomerase (TIM)"/>
    <property type="match status" value="1"/>
</dbReference>
<dbReference type="PROSITE" id="PS51440">
    <property type="entry name" value="TIM_2"/>
    <property type="match status" value="1"/>
</dbReference>
<name>TPIS_METBF</name>
<feature type="chain" id="PRO_0000307607" description="Triosephosphate isomerase">
    <location>
        <begin position="1"/>
        <end position="222"/>
    </location>
</feature>
<feature type="active site" description="Electrophile" evidence="1">
    <location>
        <position position="93"/>
    </location>
</feature>
<feature type="active site" description="Proton acceptor" evidence="1">
    <location>
        <position position="141"/>
    </location>
</feature>
<feature type="binding site" evidence="1">
    <location>
        <begin position="9"/>
        <end position="11"/>
    </location>
    <ligand>
        <name>substrate</name>
    </ligand>
</feature>
<feature type="binding site" evidence="1">
    <location>
        <position position="146"/>
    </location>
    <ligand>
        <name>substrate</name>
    </ligand>
</feature>
<feature type="binding site" evidence="1">
    <location>
        <position position="181"/>
    </location>
    <ligand>
        <name>substrate</name>
    </ligand>
</feature>
<feature type="binding site" evidence="1">
    <location>
        <begin position="202"/>
        <end position="203"/>
    </location>
    <ligand>
        <name>substrate</name>
    </ligand>
</feature>
<organism>
    <name type="scientific">Methanosarcina barkeri (strain Fusaro / DSM 804)</name>
    <dbReference type="NCBI Taxonomy" id="269797"/>
    <lineage>
        <taxon>Archaea</taxon>
        <taxon>Methanobacteriati</taxon>
        <taxon>Methanobacteriota</taxon>
        <taxon>Stenosarchaea group</taxon>
        <taxon>Methanomicrobia</taxon>
        <taxon>Methanosarcinales</taxon>
        <taxon>Methanosarcinaceae</taxon>
        <taxon>Methanosarcina</taxon>
    </lineage>
</organism>
<accession>Q46DY6</accession>
<protein>
    <recommendedName>
        <fullName evidence="1">Triosephosphate isomerase</fullName>
        <shortName evidence="1">TIM</shortName>
        <shortName evidence="1">TPI</shortName>
        <ecNumber evidence="1">5.3.1.1</ecNumber>
    </recommendedName>
    <alternativeName>
        <fullName evidence="1">Triose-phosphate isomerase</fullName>
    </alternativeName>
</protein>
<reference key="1">
    <citation type="journal article" date="2006" name="J. Bacteriol.">
        <title>The Methanosarcina barkeri genome: comparative analysis with Methanosarcina acetivorans and Methanosarcina mazei reveals extensive rearrangement within methanosarcinal genomes.</title>
        <authorList>
            <person name="Maeder D.L."/>
            <person name="Anderson I."/>
            <person name="Brettin T.S."/>
            <person name="Bruce D.C."/>
            <person name="Gilna P."/>
            <person name="Han C.S."/>
            <person name="Lapidus A."/>
            <person name="Metcalf W.W."/>
            <person name="Saunders E."/>
            <person name="Tapia R."/>
            <person name="Sowers K.R."/>
        </authorList>
    </citation>
    <scope>NUCLEOTIDE SEQUENCE [LARGE SCALE GENOMIC DNA]</scope>
    <source>
        <strain>Fusaro / DSM 804</strain>
    </source>
</reference>
<sequence length="222" mass="22856">MGLPFIVLNYKTYLQGTGQGAMEIAKACKAVSEESGVEIAVAPQLPDIYRVASEVALPVFSQHLDGIGAGSFTGHVFGKCIKEAGAVGTLINHSEKRLTLAEIEASLKAAKEFGLRSIICTNNVPTTAAAAVLGPDYVAIEPPELIGSGIPVSKADPEVVSGSVEAVAKINPRVKVLCGAGISKGEDLRAALDLGSQGVLLASGIVKATDPKAALEDLIRLI</sequence>
<proteinExistence type="inferred from homology"/>